<gene>
    <name evidence="1" type="primary">pnp</name>
    <name type="ordered locus">cbdbA932</name>
</gene>
<organism>
    <name type="scientific">Dehalococcoides mccartyi (strain CBDB1)</name>
    <dbReference type="NCBI Taxonomy" id="255470"/>
    <lineage>
        <taxon>Bacteria</taxon>
        <taxon>Bacillati</taxon>
        <taxon>Chloroflexota</taxon>
        <taxon>Dehalococcoidia</taxon>
        <taxon>Dehalococcoidales</taxon>
        <taxon>Dehalococcoidaceae</taxon>
        <taxon>Dehalococcoides</taxon>
    </lineage>
</organism>
<sequence>MITANSFERTIGGRKLVIESGKLARLADAAITIRYADTELLVTLCSAKKPREGVDFLPLTIDYEERMYAAGKIPGGFIRREGRPSEQAILAGRLTDRPLRPLLPKEWRNDLQIIITVIASDKENDADIWGVVGASTVLAMSEIPYEGPVGASRIGYINGEFVLNPTFAQLESSQLDLVVVSTRKAVVMIEAGSKEIPEDIMINAIEFAHKANQELIDLQDEIRAKLGKEKLPVPVLEIPEEVKTAVAAFVKGRVNEALSHQDKTARENAVEGLQAELVAALSETFAEGDILAAYDKEIKKAIRSTILEKDIRVNGRGIKQLRQLDAETGLLPRVHGSALFTRGDTQVMAITTLGSLQESQQLDGLSAEDTKRFMLHYNFAPFSTGEVKRSGSPGRREIGHGALAERALVPVLPTPEEFPYTIRLVADVVGSSGSTSMGSVCSSSLSLMDAGVPVKKAVAGISIGLITGENDTYCTITDIEGIEDNYGDMDFKVAGTRDGITAIQVDMKVKGISFDIIRDAIYQAKEARYNILDVMDKALAQPKTELSPYAPRMYKINIDPSKIGSVIGSGGKTIRSIIEQTNTTVDIENDGTVVIGATDEASAKKAIKIIEDLTKDIEAGSIYTGKVTRIMTFGAFVEILPGKEGMVHISELADHRVEKVEDIVKVGDDITVKVIEIDNQGRVNLSHRVILNPNAVPISRNRDSQPRRPGPFRPSDRSNS</sequence>
<keyword id="KW-0963">Cytoplasm</keyword>
<keyword id="KW-0460">Magnesium</keyword>
<keyword id="KW-0479">Metal-binding</keyword>
<keyword id="KW-0548">Nucleotidyltransferase</keyword>
<keyword id="KW-0694">RNA-binding</keyword>
<keyword id="KW-0808">Transferase</keyword>
<name>PNP_DEHMC</name>
<evidence type="ECO:0000255" key="1">
    <source>
        <dbReference type="HAMAP-Rule" id="MF_01595"/>
    </source>
</evidence>
<evidence type="ECO:0000256" key="2">
    <source>
        <dbReference type="SAM" id="MobiDB-lite"/>
    </source>
</evidence>
<protein>
    <recommendedName>
        <fullName evidence="1">Polyribonucleotide nucleotidyltransferase</fullName>
        <ecNumber evidence="1">2.7.7.8</ecNumber>
    </recommendedName>
    <alternativeName>
        <fullName evidence="1">Polynucleotide phosphorylase</fullName>
        <shortName evidence="1">PNPase</shortName>
    </alternativeName>
</protein>
<accession>Q3ZXV6</accession>
<reference key="1">
    <citation type="journal article" date="2005" name="Nat. Biotechnol.">
        <title>Genome sequence of the chlorinated compound-respiring bacterium Dehalococcoides species strain CBDB1.</title>
        <authorList>
            <person name="Kube M."/>
            <person name="Beck A."/>
            <person name="Zinder S.H."/>
            <person name="Kuhl H."/>
            <person name="Reinhardt R."/>
            <person name="Adrian L."/>
        </authorList>
    </citation>
    <scope>NUCLEOTIDE SEQUENCE [LARGE SCALE GENOMIC DNA]</scope>
    <source>
        <strain>CBDB1</strain>
    </source>
</reference>
<dbReference type="EC" id="2.7.7.8" evidence="1"/>
<dbReference type="EMBL" id="AJ965256">
    <property type="protein sequence ID" value="CAI83060.1"/>
    <property type="molecule type" value="Genomic_DNA"/>
</dbReference>
<dbReference type="RefSeq" id="WP_011309411.1">
    <property type="nucleotide sequence ID" value="NC_007356.1"/>
</dbReference>
<dbReference type="SMR" id="Q3ZXV6"/>
<dbReference type="KEGG" id="deh:cbdbA932"/>
<dbReference type="HOGENOM" id="CLU_004217_2_2_0"/>
<dbReference type="Proteomes" id="UP000000433">
    <property type="component" value="Chromosome"/>
</dbReference>
<dbReference type="GO" id="GO:0005829">
    <property type="term" value="C:cytosol"/>
    <property type="evidence" value="ECO:0007669"/>
    <property type="project" value="TreeGrafter"/>
</dbReference>
<dbReference type="GO" id="GO:0000175">
    <property type="term" value="F:3'-5'-RNA exonuclease activity"/>
    <property type="evidence" value="ECO:0007669"/>
    <property type="project" value="TreeGrafter"/>
</dbReference>
<dbReference type="GO" id="GO:0000287">
    <property type="term" value="F:magnesium ion binding"/>
    <property type="evidence" value="ECO:0007669"/>
    <property type="project" value="UniProtKB-UniRule"/>
</dbReference>
<dbReference type="GO" id="GO:0004654">
    <property type="term" value="F:polyribonucleotide nucleotidyltransferase activity"/>
    <property type="evidence" value="ECO:0007669"/>
    <property type="project" value="UniProtKB-UniRule"/>
</dbReference>
<dbReference type="GO" id="GO:0003723">
    <property type="term" value="F:RNA binding"/>
    <property type="evidence" value="ECO:0007669"/>
    <property type="project" value="UniProtKB-UniRule"/>
</dbReference>
<dbReference type="GO" id="GO:0006402">
    <property type="term" value="P:mRNA catabolic process"/>
    <property type="evidence" value="ECO:0007669"/>
    <property type="project" value="UniProtKB-UniRule"/>
</dbReference>
<dbReference type="GO" id="GO:0006396">
    <property type="term" value="P:RNA processing"/>
    <property type="evidence" value="ECO:0007669"/>
    <property type="project" value="InterPro"/>
</dbReference>
<dbReference type="CDD" id="cd02393">
    <property type="entry name" value="KH-I_PNPase"/>
    <property type="match status" value="1"/>
</dbReference>
<dbReference type="CDD" id="cd11363">
    <property type="entry name" value="RNase_PH_PNPase_1"/>
    <property type="match status" value="1"/>
</dbReference>
<dbReference type="CDD" id="cd11364">
    <property type="entry name" value="RNase_PH_PNPase_2"/>
    <property type="match status" value="1"/>
</dbReference>
<dbReference type="CDD" id="cd04472">
    <property type="entry name" value="S1_PNPase"/>
    <property type="match status" value="1"/>
</dbReference>
<dbReference type="FunFam" id="2.40.50.140:FF:000023">
    <property type="entry name" value="Polyribonucleotide nucleotidyltransferase"/>
    <property type="match status" value="1"/>
</dbReference>
<dbReference type="FunFam" id="3.30.1370.10:FF:000001">
    <property type="entry name" value="Polyribonucleotide nucleotidyltransferase"/>
    <property type="match status" value="1"/>
</dbReference>
<dbReference type="FunFam" id="3.30.230.70:FF:000001">
    <property type="entry name" value="Polyribonucleotide nucleotidyltransferase"/>
    <property type="match status" value="1"/>
</dbReference>
<dbReference type="FunFam" id="3.30.230.70:FF:000068">
    <property type="entry name" value="Polyribonucleotide nucleotidyltransferase"/>
    <property type="match status" value="1"/>
</dbReference>
<dbReference type="Gene3D" id="3.30.230.70">
    <property type="entry name" value="GHMP Kinase, N-terminal domain"/>
    <property type="match status" value="2"/>
</dbReference>
<dbReference type="Gene3D" id="3.30.1370.10">
    <property type="entry name" value="K Homology domain, type 1"/>
    <property type="match status" value="1"/>
</dbReference>
<dbReference type="Gene3D" id="2.40.50.140">
    <property type="entry name" value="Nucleic acid-binding proteins"/>
    <property type="match status" value="1"/>
</dbReference>
<dbReference type="HAMAP" id="MF_01595">
    <property type="entry name" value="PNPase"/>
    <property type="match status" value="1"/>
</dbReference>
<dbReference type="InterPro" id="IPR001247">
    <property type="entry name" value="ExoRNase_PH_dom1"/>
</dbReference>
<dbReference type="InterPro" id="IPR015847">
    <property type="entry name" value="ExoRNase_PH_dom2"/>
</dbReference>
<dbReference type="InterPro" id="IPR036345">
    <property type="entry name" value="ExoRNase_PH_dom2_sf"/>
</dbReference>
<dbReference type="InterPro" id="IPR004087">
    <property type="entry name" value="KH_dom"/>
</dbReference>
<dbReference type="InterPro" id="IPR004088">
    <property type="entry name" value="KH_dom_type_1"/>
</dbReference>
<dbReference type="InterPro" id="IPR036612">
    <property type="entry name" value="KH_dom_type_1_sf"/>
</dbReference>
<dbReference type="InterPro" id="IPR012340">
    <property type="entry name" value="NA-bd_OB-fold"/>
</dbReference>
<dbReference type="InterPro" id="IPR012162">
    <property type="entry name" value="PNPase"/>
</dbReference>
<dbReference type="InterPro" id="IPR027408">
    <property type="entry name" value="PNPase/RNase_PH_dom_sf"/>
</dbReference>
<dbReference type="InterPro" id="IPR015848">
    <property type="entry name" value="PNPase_PH_RNA-bd_bac/org-type"/>
</dbReference>
<dbReference type="InterPro" id="IPR036456">
    <property type="entry name" value="PNPase_PH_RNA-bd_sf"/>
</dbReference>
<dbReference type="InterPro" id="IPR020568">
    <property type="entry name" value="Ribosomal_Su5_D2-typ_SF"/>
</dbReference>
<dbReference type="InterPro" id="IPR003029">
    <property type="entry name" value="S1_domain"/>
</dbReference>
<dbReference type="NCBIfam" id="TIGR03591">
    <property type="entry name" value="polynuc_phos"/>
    <property type="match status" value="1"/>
</dbReference>
<dbReference type="NCBIfam" id="NF008805">
    <property type="entry name" value="PRK11824.1"/>
    <property type="match status" value="1"/>
</dbReference>
<dbReference type="PANTHER" id="PTHR11252">
    <property type="entry name" value="POLYRIBONUCLEOTIDE NUCLEOTIDYLTRANSFERASE"/>
    <property type="match status" value="1"/>
</dbReference>
<dbReference type="PANTHER" id="PTHR11252:SF0">
    <property type="entry name" value="POLYRIBONUCLEOTIDE NUCLEOTIDYLTRANSFERASE 1, MITOCHONDRIAL"/>
    <property type="match status" value="1"/>
</dbReference>
<dbReference type="Pfam" id="PF00013">
    <property type="entry name" value="KH_1"/>
    <property type="match status" value="1"/>
</dbReference>
<dbReference type="Pfam" id="PF03726">
    <property type="entry name" value="PNPase"/>
    <property type="match status" value="1"/>
</dbReference>
<dbReference type="Pfam" id="PF01138">
    <property type="entry name" value="RNase_PH"/>
    <property type="match status" value="2"/>
</dbReference>
<dbReference type="Pfam" id="PF03725">
    <property type="entry name" value="RNase_PH_C"/>
    <property type="match status" value="1"/>
</dbReference>
<dbReference type="Pfam" id="PF00575">
    <property type="entry name" value="S1"/>
    <property type="match status" value="1"/>
</dbReference>
<dbReference type="PIRSF" id="PIRSF005499">
    <property type="entry name" value="PNPase"/>
    <property type="match status" value="1"/>
</dbReference>
<dbReference type="SMART" id="SM00322">
    <property type="entry name" value="KH"/>
    <property type="match status" value="1"/>
</dbReference>
<dbReference type="SMART" id="SM00316">
    <property type="entry name" value="S1"/>
    <property type="match status" value="1"/>
</dbReference>
<dbReference type="SUPFAM" id="SSF54791">
    <property type="entry name" value="Eukaryotic type KH-domain (KH-domain type I)"/>
    <property type="match status" value="1"/>
</dbReference>
<dbReference type="SUPFAM" id="SSF50249">
    <property type="entry name" value="Nucleic acid-binding proteins"/>
    <property type="match status" value="1"/>
</dbReference>
<dbReference type="SUPFAM" id="SSF46915">
    <property type="entry name" value="Polynucleotide phosphorylase/guanosine pentaphosphate synthase (PNPase/GPSI), domain 3"/>
    <property type="match status" value="1"/>
</dbReference>
<dbReference type="SUPFAM" id="SSF55666">
    <property type="entry name" value="Ribonuclease PH domain 2-like"/>
    <property type="match status" value="2"/>
</dbReference>
<dbReference type="SUPFAM" id="SSF54211">
    <property type="entry name" value="Ribosomal protein S5 domain 2-like"/>
    <property type="match status" value="2"/>
</dbReference>
<dbReference type="PROSITE" id="PS50084">
    <property type="entry name" value="KH_TYPE_1"/>
    <property type="match status" value="1"/>
</dbReference>
<dbReference type="PROSITE" id="PS50126">
    <property type="entry name" value="S1"/>
    <property type="match status" value="1"/>
</dbReference>
<feature type="chain" id="PRO_0000329619" description="Polyribonucleotide nucleotidyltransferase">
    <location>
        <begin position="1"/>
        <end position="720"/>
    </location>
</feature>
<feature type="domain" description="KH" evidence="1">
    <location>
        <begin position="551"/>
        <end position="610"/>
    </location>
</feature>
<feature type="domain" description="S1 motif" evidence="1">
    <location>
        <begin position="620"/>
        <end position="688"/>
    </location>
</feature>
<feature type="region of interest" description="Disordered" evidence="2">
    <location>
        <begin position="697"/>
        <end position="720"/>
    </location>
</feature>
<feature type="binding site" evidence="1">
    <location>
        <position position="484"/>
    </location>
    <ligand>
        <name>Mg(2+)</name>
        <dbReference type="ChEBI" id="CHEBI:18420"/>
    </ligand>
</feature>
<feature type="binding site" evidence="1">
    <location>
        <position position="490"/>
    </location>
    <ligand>
        <name>Mg(2+)</name>
        <dbReference type="ChEBI" id="CHEBI:18420"/>
    </ligand>
</feature>
<proteinExistence type="inferred from homology"/>
<comment type="function">
    <text evidence="1">Involved in mRNA degradation. Catalyzes the phosphorolysis of single-stranded polyribonucleotides processively in the 3'- to 5'-direction.</text>
</comment>
<comment type="catalytic activity">
    <reaction evidence="1">
        <text>RNA(n+1) + phosphate = RNA(n) + a ribonucleoside 5'-diphosphate</text>
        <dbReference type="Rhea" id="RHEA:22096"/>
        <dbReference type="Rhea" id="RHEA-COMP:14527"/>
        <dbReference type="Rhea" id="RHEA-COMP:17342"/>
        <dbReference type="ChEBI" id="CHEBI:43474"/>
        <dbReference type="ChEBI" id="CHEBI:57930"/>
        <dbReference type="ChEBI" id="CHEBI:140395"/>
        <dbReference type="EC" id="2.7.7.8"/>
    </reaction>
</comment>
<comment type="cofactor">
    <cofactor evidence="1">
        <name>Mg(2+)</name>
        <dbReference type="ChEBI" id="CHEBI:18420"/>
    </cofactor>
</comment>
<comment type="subcellular location">
    <subcellularLocation>
        <location evidence="1">Cytoplasm</location>
    </subcellularLocation>
</comment>
<comment type="similarity">
    <text evidence="1">Belongs to the polyribonucleotide nucleotidyltransferase family.</text>
</comment>